<protein>
    <recommendedName>
        <fullName>U6-lycotoxin-Ls1f</fullName>
    </recommendedName>
    <alternativeName>
        <fullName>Toxin-like structure LSTX-F6</fullName>
    </alternativeName>
</protein>
<name>TX606_LYCSI</name>
<reference key="1">
    <citation type="journal article" date="2010" name="Zoology">
        <title>Transcriptome analysis of the venom glands of the Chinese wolf spider Lycosa singoriensis.</title>
        <authorList>
            <person name="Zhang Y."/>
            <person name="Chen J."/>
            <person name="Tang X."/>
            <person name="Wang F."/>
            <person name="Jiang L."/>
            <person name="Xiong X."/>
            <person name="Wang M."/>
            <person name="Rong M."/>
            <person name="Liu Z."/>
            <person name="Liang S."/>
        </authorList>
    </citation>
    <scope>NUCLEOTIDE SEQUENCE [LARGE SCALE MRNA]</scope>
    <source>
        <tissue>Venom gland</tissue>
    </source>
</reference>
<comment type="subcellular location">
    <subcellularLocation>
        <location evidence="1">Secreted</location>
    </subcellularLocation>
</comment>
<comment type="tissue specificity">
    <text>Expressed by the venom gland.</text>
</comment>
<comment type="PTM">
    <text evidence="1">Contains 4 disulfide bonds.</text>
</comment>
<comment type="similarity">
    <text evidence="3">Belongs to the neurotoxin 19 (CSTX) family. 06 (U6-Lctx) subfamily.</text>
</comment>
<sequence>MKLLLFTALVLVVISLVEVEAENERACIPLEKECTKTPGNCCSGLRCDCYRRFEQGVAKGTQCWCIEKDVTYKGV</sequence>
<feature type="signal peptide" evidence="2">
    <location>
        <begin position="1"/>
        <end position="21"/>
    </location>
</feature>
<feature type="propeptide" id="PRO_0000401733" evidence="1">
    <location>
        <begin position="22"/>
        <end position="25"/>
    </location>
</feature>
<feature type="chain" id="PRO_0000401734" description="U6-lycotoxin-Ls1f">
    <location>
        <begin position="26"/>
        <end position="75"/>
    </location>
</feature>
<dbReference type="EMBL" id="EU926040">
    <property type="protein sequence ID" value="ACI41372.1"/>
    <property type="molecule type" value="mRNA"/>
</dbReference>
<dbReference type="EMBL" id="FM864044">
    <property type="protein sequence ID" value="CAS03641.1"/>
    <property type="molecule type" value="mRNA"/>
</dbReference>
<dbReference type="SMR" id="B6DCV6"/>
<dbReference type="ArachnoServer" id="AS000978">
    <property type="toxin name" value="U6-lycotoxin-Ls1f"/>
</dbReference>
<dbReference type="GO" id="GO:0005576">
    <property type="term" value="C:extracellular region"/>
    <property type="evidence" value="ECO:0007669"/>
    <property type="project" value="UniProtKB-SubCell"/>
</dbReference>
<dbReference type="GO" id="GO:0090729">
    <property type="term" value="F:toxin activity"/>
    <property type="evidence" value="ECO:0007669"/>
    <property type="project" value="UniProtKB-KW"/>
</dbReference>
<dbReference type="InterPro" id="IPR019553">
    <property type="entry name" value="Spider_toxin_CSTX_knottin"/>
</dbReference>
<dbReference type="Pfam" id="PF10530">
    <property type="entry name" value="Toxin_35"/>
    <property type="match status" value="1"/>
</dbReference>
<proteinExistence type="evidence at transcript level"/>
<evidence type="ECO:0000250" key="1"/>
<evidence type="ECO:0000255" key="2"/>
<evidence type="ECO:0000305" key="3"/>
<accession>B6DCV6</accession>
<keyword id="KW-1015">Disulfide bond</keyword>
<keyword id="KW-0964">Secreted</keyword>
<keyword id="KW-0732">Signal</keyword>
<keyword id="KW-0800">Toxin</keyword>
<organism>
    <name type="scientific">Lycosa singoriensis</name>
    <name type="common">Wolf spider</name>
    <name type="synonym">Aranea singoriensis</name>
    <dbReference type="NCBI Taxonomy" id="434756"/>
    <lineage>
        <taxon>Eukaryota</taxon>
        <taxon>Metazoa</taxon>
        <taxon>Ecdysozoa</taxon>
        <taxon>Arthropoda</taxon>
        <taxon>Chelicerata</taxon>
        <taxon>Arachnida</taxon>
        <taxon>Araneae</taxon>
        <taxon>Araneomorphae</taxon>
        <taxon>Entelegynae</taxon>
        <taxon>Lycosoidea</taxon>
        <taxon>Lycosidae</taxon>
        <taxon>Lycosa</taxon>
    </lineage>
</organism>